<keyword id="KW-0903">Direct protein sequencing</keyword>
<keyword id="KW-1015">Disulfide bond</keyword>
<keyword id="KW-0255">Endonuclease</keyword>
<keyword id="KW-0378">Hydrolase</keyword>
<keyword id="KW-0456">Lyase</keyword>
<keyword id="KW-0540">Nuclease</keyword>
<keyword id="KW-1185">Reference proteome</keyword>
<keyword id="KW-0964">Secreted</keyword>
<name>RNAS1_CHESE</name>
<sequence>ETRYEKFLRQHVDYPKSSAPDSRTYCNQMMQRRGMTSPVCKFTNTFVHASAASITTVCGSGGTPASGDLRDSNASFALTTCRLQGGSQTPNCPYNADASTQRIRIACVGGLPVHYDKSI</sequence>
<organism>
    <name type="scientific">Chelydra serpentina</name>
    <name type="common">Snapping turtle</name>
    <name type="synonym">Testudo serpentina</name>
    <dbReference type="NCBI Taxonomy" id="8475"/>
    <lineage>
        <taxon>Eukaryota</taxon>
        <taxon>Metazoa</taxon>
        <taxon>Chordata</taxon>
        <taxon>Craniata</taxon>
        <taxon>Vertebrata</taxon>
        <taxon>Euteleostomi</taxon>
        <taxon>Archelosauria</taxon>
        <taxon>Testudinata</taxon>
        <taxon>Testudines</taxon>
        <taxon>Cryptodira</taxon>
        <taxon>Durocryptodira</taxon>
        <taxon>Americhelydia</taxon>
        <taxon>Chelydroidea</taxon>
        <taxon>Chelydridae</taxon>
        <taxon>Chelydra</taxon>
    </lineage>
</organism>
<feature type="chain" id="PRO_0000057175" description="Ribonuclease">
    <location>
        <begin position="1"/>
        <end position="119"/>
    </location>
</feature>
<feature type="active site" description="Proton acceptor" evidence="1">
    <location>
        <position position="11"/>
    </location>
</feature>
<feature type="active site" description="Proton donor" evidence="1">
    <location>
        <position position="114"/>
    </location>
</feature>
<feature type="binding site" evidence="1">
    <location>
        <position position="6"/>
    </location>
    <ligand>
        <name>substrate</name>
    </ligand>
</feature>
<feature type="binding site" evidence="1">
    <location>
        <position position="9"/>
    </location>
    <ligand>
        <name>substrate</name>
    </ligand>
</feature>
<feature type="binding site" evidence="1">
    <location>
        <begin position="41"/>
        <end position="45"/>
    </location>
    <ligand>
        <name>substrate</name>
    </ligand>
</feature>
<feature type="binding site" evidence="1">
    <location>
        <position position="82"/>
    </location>
    <ligand>
        <name>substrate</name>
    </ligand>
</feature>
<feature type="disulfide bond" evidence="1">
    <location>
        <begin position="26"/>
        <end position="81"/>
    </location>
</feature>
<feature type="disulfide bond" evidence="1">
    <location>
        <begin position="40"/>
        <end position="92"/>
    </location>
</feature>
<feature type="disulfide bond" evidence="1">
    <location>
        <begin position="58"/>
        <end position="107"/>
    </location>
</feature>
<reference key="1">
    <citation type="journal article" date="1985" name="Eur. J. Biochem.">
        <title>The amino acid sequence of snapping turtle (Chelydra serpentina) ribonuclease.</title>
        <authorList>
            <person name="Beintema J.J."/>
            <person name="Broos J."/>
            <person name="Meulenberg J."/>
            <person name="Schueller C."/>
        </authorList>
    </citation>
    <scope>PROTEIN SEQUENCE</scope>
    <source>
        <tissue>Pancreas</tissue>
    </source>
</reference>
<reference key="2">
    <citation type="journal article" date="1972" name="Nature">
        <title>Evolution of ribonuclease in relation to polypeptide folding mechanisms.</title>
        <authorList>
            <person name="Barnard E.A."/>
            <person name="Cohen M.S."/>
            <person name="Gold M.H."/>
            <person name="Kim J.K."/>
        </authorList>
    </citation>
    <scope>PROTEIN SEQUENCE OF 1-30</scope>
</reference>
<comment type="function">
    <text evidence="1">Endonuclease that catalyzes the cleavage of RNA on the 3' side of pyrimidine nucleotides. Acts on single-stranded and double-stranded RNA (By similarity).</text>
</comment>
<comment type="catalytic activity">
    <reaction>
        <text>an [RNA] containing cytidine + H2O = an [RNA]-3'-cytidine-3'-phosphate + a 5'-hydroxy-ribonucleotide-3'-[RNA].</text>
        <dbReference type="EC" id="4.6.1.18"/>
    </reaction>
</comment>
<comment type="catalytic activity">
    <reaction>
        <text>an [RNA] containing uridine + H2O = an [RNA]-3'-uridine-3'-phosphate + a 5'-hydroxy-ribonucleotide-3'-[RNA].</text>
        <dbReference type="EC" id="4.6.1.18"/>
    </reaction>
</comment>
<comment type="subunit">
    <text evidence="1">Monomer. Interacts with and forms tight 1:1 complexes with RNH1. Dimerization of two such complexes may occur. Interaction with RNH1 inhibits this protein (By similarity).</text>
</comment>
<comment type="subcellular location">
    <subcellularLocation>
        <location>Secreted</location>
    </subcellularLocation>
</comment>
<comment type="tissue specificity">
    <text>Pancreas.</text>
</comment>
<comment type="similarity">
    <text evidence="2">Belongs to the pancreatic ribonuclease family.</text>
</comment>
<proteinExistence type="evidence at protein level"/>
<accession>P04061</accession>
<protein>
    <recommendedName>
        <fullName>Ribonuclease</fullName>
        <ecNumber>4.6.1.18</ecNumber>
    </recommendedName>
</protein>
<dbReference type="EC" id="4.6.1.18"/>
<dbReference type="PIR" id="A91155">
    <property type="entry name" value="NRST"/>
</dbReference>
<dbReference type="SMR" id="P04061"/>
<dbReference type="Proteomes" id="UP000694403">
    <property type="component" value="Unplaced"/>
</dbReference>
<dbReference type="GO" id="GO:0005576">
    <property type="term" value="C:extracellular region"/>
    <property type="evidence" value="ECO:0007669"/>
    <property type="project" value="UniProtKB-SubCell"/>
</dbReference>
<dbReference type="GO" id="GO:0016829">
    <property type="term" value="F:lyase activity"/>
    <property type="evidence" value="ECO:0007669"/>
    <property type="project" value="UniProtKB-KW"/>
</dbReference>
<dbReference type="GO" id="GO:0003676">
    <property type="term" value="F:nucleic acid binding"/>
    <property type="evidence" value="ECO:0007669"/>
    <property type="project" value="InterPro"/>
</dbReference>
<dbReference type="GO" id="GO:0004522">
    <property type="term" value="F:ribonuclease A activity"/>
    <property type="evidence" value="ECO:0007669"/>
    <property type="project" value="UniProtKB-EC"/>
</dbReference>
<dbReference type="GO" id="GO:0050830">
    <property type="term" value="P:defense response to Gram-positive bacterium"/>
    <property type="evidence" value="ECO:0007669"/>
    <property type="project" value="TreeGrafter"/>
</dbReference>
<dbReference type="CDD" id="cd06265">
    <property type="entry name" value="RNase_A_canonical"/>
    <property type="match status" value="1"/>
</dbReference>
<dbReference type="FunFam" id="3.10.130.10:FF:000001">
    <property type="entry name" value="Ribonuclease pancreatic"/>
    <property type="match status" value="1"/>
</dbReference>
<dbReference type="Gene3D" id="3.10.130.10">
    <property type="entry name" value="Ribonuclease A-like domain"/>
    <property type="match status" value="1"/>
</dbReference>
<dbReference type="InterPro" id="IPR001427">
    <property type="entry name" value="RNaseA"/>
</dbReference>
<dbReference type="InterPro" id="IPR036816">
    <property type="entry name" value="RNaseA-like_dom_sf"/>
</dbReference>
<dbReference type="InterPro" id="IPR023411">
    <property type="entry name" value="RNaseA_AS"/>
</dbReference>
<dbReference type="InterPro" id="IPR023412">
    <property type="entry name" value="RNaseA_domain"/>
</dbReference>
<dbReference type="PANTHER" id="PTHR11437:SF10">
    <property type="entry name" value="ANGIOGENIN-RELATED"/>
    <property type="match status" value="1"/>
</dbReference>
<dbReference type="PANTHER" id="PTHR11437">
    <property type="entry name" value="RIBONUCLEASE"/>
    <property type="match status" value="1"/>
</dbReference>
<dbReference type="Pfam" id="PF00074">
    <property type="entry name" value="RnaseA"/>
    <property type="match status" value="1"/>
</dbReference>
<dbReference type="PRINTS" id="PR00794">
    <property type="entry name" value="RIBONUCLEASE"/>
</dbReference>
<dbReference type="SMART" id="SM00092">
    <property type="entry name" value="RNAse_Pc"/>
    <property type="match status" value="1"/>
</dbReference>
<dbReference type="SUPFAM" id="SSF54076">
    <property type="entry name" value="RNase A-like"/>
    <property type="match status" value="1"/>
</dbReference>
<dbReference type="PROSITE" id="PS00127">
    <property type="entry name" value="RNASE_PANCREATIC"/>
    <property type="match status" value="1"/>
</dbReference>
<evidence type="ECO:0000250" key="1"/>
<evidence type="ECO:0000305" key="2"/>